<reference key="1">
    <citation type="journal article" date="2006" name="BMC Genomics">
        <title>Complete genome sequence of Shigella flexneri 5b and comparison with Shigella flexneri 2a.</title>
        <authorList>
            <person name="Nie H."/>
            <person name="Yang F."/>
            <person name="Zhang X."/>
            <person name="Yang J."/>
            <person name="Chen L."/>
            <person name="Wang J."/>
            <person name="Xiong Z."/>
            <person name="Peng J."/>
            <person name="Sun L."/>
            <person name="Dong J."/>
            <person name="Xue Y."/>
            <person name="Xu X."/>
            <person name="Chen S."/>
            <person name="Yao Z."/>
            <person name="Shen Y."/>
            <person name="Jin Q."/>
        </authorList>
    </citation>
    <scope>NUCLEOTIDE SEQUENCE [LARGE SCALE GENOMIC DNA]</scope>
    <source>
        <strain>8401</strain>
    </source>
</reference>
<name>FABH_SHIF8</name>
<proteinExistence type="inferred from homology"/>
<evidence type="ECO:0000255" key="1">
    <source>
        <dbReference type="HAMAP-Rule" id="MF_01815"/>
    </source>
</evidence>
<feature type="chain" id="PRO_1000056408" description="Beta-ketoacyl-[acyl-carrier-protein] synthase III">
    <location>
        <begin position="1"/>
        <end position="317"/>
    </location>
</feature>
<feature type="region of interest" description="ACP-binding" evidence="1">
    <location>
        <begin position="245"/>
        <end position="249"/>
    </location>
</feature>
<feature type="active site" evidence="1">
    <location>
        <position position="112"/>
    </location>
</feature>
<feature type="active site" evidence="1">
    <location>
        <position position="244"/>
    </location>
</feature>
<feature type="active site" evidence="1">
    <location>
        <position position="274"/>
    </location>
</feature>
<sequence>MYTKIIGTGSYLPEQVRTNADLEKMVDTSDEWIVTRTGIRERHIAAPNETVSTMGFEAATRAIEMAGIEKDQIGLIVVATTSATHAFPSAACQIQSMLDIKGCPAFDVAAACAGFTYALSVADQYVKSGAVKYALVVGSDVLARTCDPTDRGTIIIFGDGAGAAVLAASEEPGIISTHLHADGSYGELLTLPNADRVNPENSIHLTMAGNEVFKVAVTELAHIVDETLAANNLDRSQLDWLVPHQANLRIISATAKKLGMSMDNVVVTLDRHGNTSAASVPCALDEAVRDGRIKPGQLVLLEAFGGGFTWGSALVRF</sequence>
<comment type="function">
    <text evidence="1">Catalyzes the condensation reaction of fatty acid synthesis by the addition to an acyl acceptor of two carbons from malonyl-ACP. Catalyzes the first condensation reaction which initiates fatty acid synthesis and may therefore play a role in governing the total rate of fatty acid production. Possesses both acetoacetyl-ACP synthase and acetyl transacylase activities. Its substrate specificity determines the biosynthesis of branched-chain and/or straight-chain of fatty acids.</text>
</comment>
<comment type="catalytic activity">
    <reaction evidence="1">
        <text>malonyl-[ACP] + acetyl-CoA + H(+) = 3-oxobutanoyl-[ACP] + CO2 + CoA</text>
        <dbReference type="Rhea" id="RHEA:12080"/>
        <dbReference type="Rhea" id="RHEA-COMP:9623"/>
        <dbReference type="Rhea" id="RHEA-COMP:9625"/>
        <dbReference type="ChEBI" id="CHEBI:15378"/>
        <dbReference type="ChEBI" id="CHEBI:16526"/>
        <dbReference type="ChEBI" id="CHEBI:57287"/>
        <dbReference type="ChEBI" id="CHEBI:57288"/>
        <dbReference type="ChEBI" id="CHEBI:78449"/>
        <dbReference type="ChEBI" id="CHEBI:78450"/>
        <dbReference type="EC" id="2.3.1.180"/>
    </reaction>
</comment>
<comment type="pathway">
    <text evidence="1">Lipid metabolism; fatty acid biosynthesis.</text>
</comment>
<comment type="subunit">
    <text evidence="1">Homodimer.</text>
</comment>
<comment type="subcellular location">
    <subcellularLocation>
        <location evidence="1">Cytoplasm</location>
    </subcellularLocation>
</comment>
<comment type="domain">
    <text evidence="1">The last Arg residue of the ACP-binding site is essential for the weak association between ACP/AcpP and FabH.</text>
</comment>
<comment type="similarity">
    <text evidence="1">Belongs to the thiolase-like superfamily. FabH family.</text>
</comment>
<accession>Q0T5U5</accession>
<organism>
    <name type="scientific">Shigella flexneri serotype 5b (strain 8401)</name>
    <dbReference type="NCBI Taxonomy" id="373384"/>
    <lineage>
        <taxon>Bacteria</taxon>
        <taxon>Pseudomonadati</taxon>
        <taxon>Pseudomonadota</taxon>
        <taxon>Gammaproteobacteria</taxon>
        <taxon>Enterobacterales</taxon>
        <taxon>Enterobacteriaceae</taxon>
        <taxon>Shigella</taxon>
    </lineage>
</organism>
<dbReference type="EC" id="2.3.1.180" evidence="1"/>
<dbReference type="EMBL" id="CP000266">
    <property type="protein sequence ID" value="ABF03320.1"/>
    <property type="molecule type" value="Genomic_DNA"/>
</dbReference>
<dbReference type="RefSeq" id="WP_000288128.1">
    <property type="nucleotide sequence ID" value="NC_008258.1"/>
</dbReference>
<dbReference type="SMR" id="Q0T5U5"/>
<dbReference type="KEGG" id="sfv:SFV_1111"/>
<dbReference type="HOGENOM" id="CLU_039592_4_1_6"/>
<dbReference type="UniPathway" id="UPA00094"/>
<dbReference type="Proteomes" id="UP000000659">
    <property type="component" value="Chromosome"/>
</dbReference>
<dbReference type="GO" id="GO:0005737">
    <property type="term" value="C:cytoplasm"/>
    <property type="evidence" value="ECO:0007669"/>
    <property type="project" value="UniProtKB-SubCell"/>
</dbReference>
<dbReference type="GO" id="GO:0004315">
    <property type="term" value="F:3-oxoacyl-[acyl-carrier-protein] synthase activity"/>
    <property type="evidence" value="ECO:0007669"/>
    <property type="project" value="InterPro"/>
</dbReference>
<dbReference type="GO" id="GO:0033818">
    <property type="term" value="F:beta-ketoacyl-acyl-carrier-protein synthase III activity"/>
    <property type="evidence" value="ECO:0007669"/>
    <property type="project" value="UniProtKB-UniRule"/>
</dbReference>
<dbReference type="GO" id="GO:0006633">
    <property type="term" value="P:fatty acid biosynthetic process"/>
    <property type="evidence" value="ECO:0007669"/>
    <property type="project" value="UniProtKB-UniRule"/>
</dbReference>
<dbReference type="CDD" id="cd00830">
    <property type="entry name" value="KAS_III"/>
    <property type="match status" value="1"/>
</dbReference>
<dbReference type="FunFam" id="3.40.47.10:FF:000004">
    <property type="entry name" value="3-oxoacyl-[acyl-carrier-protein] synthase 3"/>
    <property type="match status" value="1"/>
</dbReference>
<dbReference type="Gene3D" id="3.40.47.10">
    <property type="match status" value="1"/>
</dbReference>
<dbReference type="HAMAP" id="MF_01815">
    <property type="entry name" value="FabH"/>
    <property type="match status" value="1"/>
</dbReference>
<dbReference type="InterPro" id="IPR013747">
    <property type="entry name" value="ACP_syn_III_C"/>
</dbReference>
<dbReference type="InterPro" id="IPR013751">
    <property type="entry name" value="ACP_syn_III_N"/>
</dbReference>
<dbReference type="InterPro" id="IPR004655">
    <property type="entry name" value="FabH"/>
</dbReference>
<dbReference type="InterPro" id="IPR016039">
    <property type="entry name" value="Thiolase-like"/>
</dbReference>
<dbReference type="NCBIfam" id="TIGR00747">
    <property type="entry name" value="fabH"/>
    <property type="match status" value="1"/>
</dbReference>
<dbReference type="NCBIfam" id="NF006829">
    <property type="entry name" value="PRK09352.1"/>
    <property type="match status" value="1"/>
</dbReference>
<dbReference type="PANTHER" id="PTHR43091">
    <property type="entry name" value="3-OXOACYL-[ACYL-CARRIER-PROTEIN] SYNTHASE"/>
    <property type="match status" value="1"/>
</dbReference>
<dbReference type="PANTHER" id="PTHR43091:SF1">
    <property type="entry name" value="BETA-KETOACYL-[ACYL-CARRIER-PROTEIN] SYNTHASE III, CHLOROPLASTIC"/>
    <property type="match status" value="1"/>
</dbReference>
<dbReference type="Pfam" id="PF08545">
    <property type="entry name" value="ACP_syn_III"/>
    <property type="match status" value="1"/>
</dbReference>
<dbReference type="Pfam" id="PF08541">
    <property type="entry name" value="ACP_syn_III_C"/>
    <property type="match status" value="1"/>
</dbReference>
<dbReference type="SUPFAM" id="SSF53901">
    <property type="entry name" value="Thiolase-like"/>
    <property type="match status" value="1"/>
</dbReference>
<gene>
    <name evidence="1" type="primary">fabH</name>
    <name type="ordered locus">SFV_1111</name>
</gene>
<protein>
    <recommendedName>
        <fullName evidence="1">Beta-ketoacyl-[acyl-carrier-protein] synthase III</fullName>
        <shortName evidence="1">Beta-ketoacyl-ACP synthase III</shortName>
        <shortName evidence="1">KAS III</shortName>
        <ecNumber evidence="1">2.3.1.180</ecNumber>
    </recommendedName>
    <alternativeName>
        <fullName evidence="1">3-oxoacyl-[acyl-carrier-protein] synthase 3</fullName>
    </alternativeName>
    <alternativeName>
        <fullName evidence="1">3-oxoacyl-[acyl-carrier-protein] synthase III</fullName>
    </alternativeName>
</protein>
<keyword id="KW-0012">Acyltransferase</keyword>
<keyword id="KW-0963">Cytoplasm</keyword>
<keyword id="KW-0275">Fatty acid biosynthesis</keyword>
<keyword id="KW-0276">Fatty acid metabolism</keyword>
<keyword id="KW-0444">Lipid biosynthesis</keyword>
<keyword id="KW-0443">Lipid metabolism</keyword>
<keyword id="KW-0511">Multifunctional enzyme</keyword>
<keyword id="KW-0808">Transferase</keyword>